<dbReference type="EMBL" id="X66845">
    <property type="protein sequence ID" value="CAA47321.1"/>
    <property type="molecule type" value="mRNA"/>
</dbReference>
<dbReference type="PIR" id="A43423">
    <property type="entry name" value="A43423"/>
</dbReference>
<dbReference type="RefSeq" id="NP_062107.1">
    <property type="nucleotide sequence ID" value="NM_019234.1"/>
</dbReference>
<dbReference type="SMR" id="Q63100"/>
<dbReference type="BioGRID" id="248198">
    <property type="interactions" value="6"/>
</dbReference>
<dbReference type="CORUM" id="Q63100"/>
<dbReference type="FunCoup" id="Q63100">
    <property type="interactions" value="1721"/>
</dbReference>
<dbReference type="IntAct" id="Q63100">
    <property type="interactions" value="1"/>
</dbReference>
<dbReference type="MINT" id="Q63100"/>
<dbReference type="STRING" id="10116.ENSRNOP00000013184"/>
<dbReference type="iPTMnet" id="Q63100"/>
<dbReference type="PhosphoSitePlus" id="Q63100"/>
<dbReference type="SwissPalm" id="Q63100"/>
<dbReference type="PaxDb" id="10116-ENSRNOP00000013184"/>
<dbReference type="GeneID" id="29564"/>
<dbReference type="KEGG" id="rno:29564"/>
<dbReference type="UCSC" id="RGD:2512">
    <molecule id="Q63100-1"/>
    <property type="organism name" value="rat"/>
</dbReference>
<dbReference type="AGR" id="RGD:2512"/>
<dbReference type="CTD" id="1780"/>
<dbReference type="RGD" id="2512">
    <property type="gene designation" value="Dync1i1"/>
</dbReference>
<dbReference type="eggNOG" id="KOG1587">
    <property type="taxonomic scope" value="Eukaryota"/>
</dbReference>
<dbReference type="InParanoid" id="Q63100"/>
<dbReference type="OrthoDB" id="4189at2759"/>
<dbReference type="PhylomeDB" id="Q63100"/>
<dbReference type="Reactome" id="R-RNO-141444">
    <property type="pathway name" value="Amplification of signal from unattached kinetochores via a MAD2 inhibitory signal"/>
</dbReference>
<dbReference type="Reactome" id="R-RNO-2132295">
    <property type="pathway name" value="MHC class II antigen presentation"/>
</dbReference>
<dbReference type="Reactome" id="R-RNO-2467813">
    <property type="pathway name" value="Separation of Sister Chromatids"/>
</dbReference>
<dbReference type="Reactome" id="R-RNO-2500257">
    <property type="pathway name" value="Resolution of Sister Chromatid Cohesion"/>
</dbReference>
<dbReference type="Reactome" id="R-RNO-3371497">
    <property type="pathway name" value="HSP90 chaperone cycle for steroid hormone receptors (SHR) in the presence of ligand"/>
</dbReference>
<dbReference type="Reactome" id="R-RNO-5663220">
    <property type="pathway name" value="RHO GTPases Activate Formins"/>
</dbReference>
<dbReference type="Reactome" id="R-RNO-6807878">
    <property type="pathway name" value="COPI-mediated anterograde transport"/>
</dbReference>
<dbReference type="Reactome" id="R-RNO-6811436">
    <property type="pathway name" value="COPI-independent Golgi-to-ER retrograde traffic"/>
</dbReference>
<dbReference type="Reactome" id="R-RNO-68877">
    <property type="pathway name" value="Mitotic Prometaphase"/>
</dbReference>
<dbReference type="Reactome" id="R-RNO-9646399">
    <property type="pathway name" value="Aggrephagy"/>
</dbReference>
<dbReference type="Reactome" id="R-RNO-9648025">
    <property type="pathway name" value="EML4 and NUDC in mitotic spindle formation"/>
</dbReference>
<dbReference type="PRO" id="PR:Q63100"/>
<dbReference type="Proteomes" id="UP000002494">
    <property type="component" value="Unplaced"/>
</dbReference>
<dbReference type="GO" id="GO:1904115">
    <property type="term" value="C:axon cytoplasm"/>
    <property type="evidence" value="ECO:0000314"/>
    <property type="project" value="SynGO-UCL"/>
</dbReference>
<dbReference type="GO" id="GO:0005737">
    <property type="term" value="C:cytoplasm"/>
    <property type="evidence" value="ECO:0000266"/>
    <property type="project" value="RGD"/>
</dbReference>
<dbReference type="GO" id="GO:0005868">
    <property type="term" value="C:cytoplasmic dynein complex"/>
    <property type="evidence" value="ECO:0000314"/>
    <property type="project" value="RGD"/>
</dbReference>
<dbReference type="GO" id="GO:0036464">
    <property type="term" value="C:cytoplasmic ribonucleoprotein granule"/>
    <property type="evidence" value="ECO:0000266"/>
    <property type="project" value="RGD"/>
</dbReference>
<dbReference type="GO" id="GO:0043657">
    <property type="term" value="C:host cell"/>
    <property type="evidence" value="ECO:0007669"/>
    <property type="project" value="GOC"/>
</dbReference>
<dbReference type="GO" id="GO:0000776">
    <property type="term" value="C:kinetochore"/>
    <property type="evidence" value="ECO:0000250"/>
    <property type="project" value="UniProtKB"/>
</dbReference>
<dbReference type="GO" id="GO:0005874">
    <property type="term" value="C:microtubule"/>
    <property type="evidence" value="ECO:0007669"/>
    <property type="project" value="UniProtKB-KW"/>
</dbReference>
<dbReference type="GO" id="GO:0005634">
    <property type="term" value="C:nucleus"/>
    <property type="evidence" value="ECO:0000266"/>
    <property type="project" value="RGD"/>
</dbReference>
<dbReference type="GO" id="GO:0048471">
    <property type="term" value="C:perinuclear region of cytoplasm"/>
    <property type="evidence" value="ECO:0000314"/>
    <property type="project" value="HGNC-UCL"/>
</dbReference>
<dbReference type="GO" id="GO:0055037">
    <property type="term" value="C:recycling endosome"/>
    <property type="evidence" value="ECO:0000266"/>
    <property type="project" value="RGD"/>
</dbReference>
<dbReference type="GO" id="GO:0000922">
    <property type="term" value="C:spindle pole"/>
    <property type="evidence" value="ECO:0000250"/>
    <property type="project" value="UniProtKB"/>
</dbReference>
<dbReference type="GO" id="GO:0031982">
    <property type="term" value="C:vesicle"/>
    <property type="evidence" value="ECO:0000250"/>
    <property type="project" value="UniProtKB"/>
</dbReference>
<dbReference type="GO" id="GO:0045504">
    <property type="term" value="F:dynein heavy chain binding"/>
    <property type="evidence" value="ECO:0000318"/>
    <property type="project" value="GO_Central"/>
</dbReference>
<dbReference type="GO" id="GO:0045503">
    <property type="term" value="F:dynein light chain binding"/>
    <property type="evidence" value="ECO:0000266"/>
    <property type="project" value="RGD"/>
</dbReference>
<dbReference type="GO" id="GO:0008017">
    <property type="term" value="F:microtubule binding"/>
    <property type="evidence" value="ECO:0000314"/>
    <property type="project" value="HGNC-UCL"/>
</dbReference>
<dbReference type="GO" id="GO:0003777">
    <property type="term" value="F:microtubule motor activity"/>
    <property type="evidence" value="ECO:0000314"/>
    <property type="project" value="HGNC-UCL"/>
</dbReference>
<dbReference type="GO" id="GO:0030507">
    <property type="term" value="F:spectrin binding"/>
    <property type="evidence" value="ECO:0000266"/>
    <property type="project" value="RGD"/>
</dbReference>
<dbReference type="GO" id="GO:0075733">
    <property type="term" value="P:intracellular transport of virus"/>
    <property type="evidence" value="ECO:0000266"/>
    <property type="project" value="RGD"/>
</dbReference>
<dbReference type="GO" id="GO:0010970">
    <property type="term" value="P:transport along microtubule"/>
    <property type="evidence" value="ECO:0000318"/>
    <property type="project" value="GO_Central"/>
</dbReference>
<dbReference type="GO" id="GO:0047496">
    <property type="term" value="P:vesicle transport along microtubule"/>
    <property type="evidence" value="ECO:0000314"/>
    <property type="project" value="HGNC-UCL"/>
</dbReference>
<dbReference type="FunFam" id="2.130.10.10:FF:000108">
    <property type="entry name" value="cytoplasmic dynein 1 intermediate chain 1 isoform X1"/>
    <property type="match status" value="1"/>
</dbReference>
<dbReference type="FunFam" id="2.130.10.10:FF:000026">
    <property type="entry name" value="cytoplasmic dynein 1 intermediate chain 2 isoform X2"/>
    <property type="match status" value="1"/>
</dbReference>
<dbReference type="Gene3D" id="2.130.10.10">
    <property type="entry name" value="YVTN repeat-like/Quinoprotein amine dehydrogenase"/>
    <property type="match status" value="2"/>
</dbReference>
<dbReference type="InterPro" id="IPR025956">
    <property type="entry name" value="DYNC1I1/DYNC1I2"/>
</dbReference>
<dbReference type="InterPro" id="IPR050687">
    <property type="entry name" value="Dynein_IC"/>
</dbReference>
<dbReference type="InterPro" id="IPR015943">
    <property type="entry name" value="WD40/YVTN_repeat-like_dom_sf"/>
</dbReference>
<dbReference type="InterPro" id="IPR036322">
    <property type="entry name" value="WD40_repeat_dom_sf"/>
</dbReference>
<dbReference type="InterPro" id="IPR001680">
    <property type="entry name" value="WD40_rpt"/>
</dbReference>
<dbReference type="PANTHER" id="PTHR12442:SF34">
    <property type="entry name" value="CYTOPLASMIC DYNEIN 1 INTERMEDIATE CHAIN 1"/>
    <property type="match status" value="1"/>
</dbReference>
<dbReference type="PANTHER" id="PTHR12442">
    <property type="entry name" value="DYNEIN INTERMEDIATE CHAIN"/>
    <property type="match status" value="1"/>
</dbReference>
<dbReference type="Pfam" id="PF11540">
    <property type="entry name" value="Dynein_IC2"/>
    <property type="match status" value="1"/>
</dbReference>
<dbReference type="Pfam" id="PF00400">
    <property type="entry name" value="WD40"/>
    <property type="match status" value="2"/>
</dbReference>
<dbReference type="SMART" id="SM00320">
    <property type="entry name" value="WD40"/>
    <property type="match status" value="5"/>
</dbReference>
<dbReference type="SUPFAM" id="SSF50978">
    <property type="entry name" value="WD40 repeat-like"/>
    <property type="match status" value="1"/>
</dbReference>
<dbReference type="PROSITE" id="PS50294">
    <property type="entry name" value="WD_REPEATS_REGION"/>
    <property type="match status" value="1"/>
</dbReference>
<accession>Q63100</accession>
<protein>
    <recommendedName>
        <fullName>Cytoplasmic dynein 1 intermediate chain 1</fullName>
    </recommendedName>
    <alternativeName>
        <fullName>Cytoplasmic dynein intermediate chain 1</fullName>
    </alternativeName>
    <alternativeName>
        <fullName>Dynein intermediate chain 1, cytosolic</fullName>
        <shortName>DH IC-1</shortName>
    </alternativeName>
</protein>
<keyword id="KW-0007">Acetylation</keyword>
<keyword id="KW-0025">Alternative splicing</keyword>
<keyword id="KW-0137">Centromere</keyword>
<keyword id="KW-0158">Chromosome</keyword>
<keyword id="KW-0963">Cytoplasm</keyword>
<keyword id="KW-0206">Cytoskeleton</keyword>
<keyword id="KW-0243">Dynein</keyword>
<keyword id="KW-0995">Kinetochore</keyword>
<keyword id="KW-0493">Microtubule</keyword>
<keyword id="KW-0505">Motor protein</keyword>
<keyword id="KW-0597">Phosphoprotein</keyword>
<keyword id="KW-1185">Reference proteome</keyword>
<keyword id="KW-0677">Repeat</keyword>
<keyword id="KW-0813">Transport</keyword>
<keyword id="KW-0853">WD repeat</keyword>
<name>DC1I1_RAT</name>
<comment type="function">
    <text>Acts as one of several non-catalytic accessory components of the cytoplasmic dynein 1 complex that are thought to be involved in linking dynein to cargos and to adapter proteins that regulate dynein function. Cytoplasmic dynein 1 acts as a motor for the intracellular retrograde motility of vesicles and organelles along microtubules. The intermediate chains mediate the binding of dynein to dynactin via its 150 kDa component (p150-glued) DCTN1. May play a role in mediating the interaction of cytoplasmic dynein with membranous organelles and kinetochores.</text>
</comment>
<comment type="subunit">
    <text evidence="2 7 8 9 10 11 12">Homodimer (By similarity). The cytoplasmic dynein 1 complex consists of two catalytic heavy chains (HCs) and a number of non-catalytic subunits presented by intermediate chains (ICs), light intermediate chains (LICs) and light chains (LCs); the composition seems to vary in respect to the IC, LIC and LC composition. The heavy chain homodimer serves as a scaffold for the probable homodimeric assembly of the respective non-catalytic subunits. The ICs and LICs bind directly to the HC dimer and the LCs assemble on the IC dimer. Isoform 1, isoform 2 and isoform 3 interact with DYNC1H1. Isoform 1, isoform 2 and isoform 3 interact with DYNLT3. Isoform 1, isoform 2 and isoform 3 interact with DYNLT1. Interacts with DCTN1. Interacts with MCRS1; the interaction is required for the proper distribution of centriolar satellites (By similarity).</text>
</comment>
<comment type="subcellular location">
    <subcellularLocation>
        <location evidence="13">Cytoplasm</location>
    </subcellularLocation>
    <subcellularLocation>
        <location evidence="1">Chromosome</location>
        <location evidence="1">Centromere</location>
        <location evidence="1">Kinetochore</location>
    </subcellularLocation>
    <subcellularLocation>
        <location evidence="1">Cytoplasm</location>
        <location evidence="1">Cytoskeleton</location>
        <location evidence="1">Spindle pole</location>
    </subcellularLocation>
</comment>
<comment type="alternative products">
    <event type="alternative splicing"/>
    <isoform>
        <id>Q63100-1</id>
        <name>1</name>
        <name>1A</name>
        <sequence type="displayed"/>
    </isoform>
    <isoform>
        <id>Q63100-3</id>
        <name>2</name>
        <name>1B</name>
        <sequence type="described" ref="VSP_039087"/>
    </isoform>
    <isoform>
        <id>Q63100-4</id>
        <name>3</name>
        <name>1C</name>
        <sequence type="described" ref="VSP_039087 VSP_039088"/>
    </isoform>
</comment>
<comment type="tissue specificity">
    <text>High levels seen in the brain and testis, while a lower level expression is seen in the liver, spleen, kidney, lung, skeletal muscle and heart.</text>
</comment>
<comment type="similarity">
    <text evidence="13">Belongs to the dynein intermediate chain family.</text>
</comment>
<sequence>MSDKSDLKAELERKKQRLAQIREEKKRKEEERKKKEADMQQKKEPVPDDSDLDRKRRETEALLQSIGISPEPPLVQPLHFLTWDTCYFHYLVPTPMSPSSKSVSTPSEAGSQDDLGPLTRTLQWDTDPSVLQLQSDSELGRRLNKLGVSKVTQVDFLPREVVSYSKETQTPLATHQSEEDEEDEEMVEPKVGHDSELENQDKKQETKEAPPRELTEEEKQQILHSEEFLIFFDRTIRVIERALAEDSDIFFDYSGRELEEKDGDVQAGANLSFNRQFYDEHWSKHRVVTCMDWSLQYPELMVASYSNNEDAPHEPDGVALVWNMKFKKTTPEYVFHCQSSVMSVCFARFHPNLVVGGTYSGQIVLWDNRSHRRTPVQRTPLSAAAHTHPVYCVNVVGTQNAHNLITVSTDGKMCSWSLDMLSTPQESMELVYNKSKPVAVTGMAFPTGDVNNFVVGSEEGTVYTACRHGSKAGIGEVFEGHQGPVTGINCHMAVGPIDFSHLFVTSSFDWTVKLWTTKHNKPLYSFEDNADYVYDVMWSPVHPALFACVDGMGRLDLWNLNSDTEVPTASVAIEGAYALNRVRWAQGGKEVAVGDSEGRIWIYDVGELAVPHNDEWTRFARTLVEIRANRADSEEEGAVELAA</sequence>
<proteinExistence type="evidence at protein level"/>
<gene>
    <name type="primary">Dync1i1</name>
    <name type="synonym">Dnci1</name>
    <name type="synonym">Dncic1</name>
</gene>
<evidence type="ECO:0000250" key="1"/>
<evidence type="ECO:0000250" key="2">
    <source>
        <dbReference type="UniProtKB" id="O14576"/>
    </source>
</evidence>
<evidence type="ECO:0000250" key="3">
    <source>
        <dbReference type="UniProtKB" id="O88485"/>
    </source>
</evidence>
<evidence type="ECO:0000250" key="4">
    <source>
        <dbReference type="UniProtKB" id="Q13409"/>
    </source>
</evidence>
<evidence type="ECO:0000250" key="5">
    <source>
        <dbReference type="UniProtKB" id="Q62871"/>
    </source>
</evidence>
<evidence type="ECO:0000256" key="6">
    <source>
        <dbReference type="SAM" id="MobiDB-lite"/>
    </source>
</evidence>
<evidence type="ECO:0000269" key="7">
    <source>
    </source>
</evidence>
<evidence type="ECO:0000269" key="8">
    <source>
    </source>
</evidence>
<evidence type="ECO:0000269" key="9">
    <source>
    </source>
</evidence>
<evidence type="ECO:0000269" key="10">
    <source>
    </source>
</evidence>
<evidence type="ECO:0000269" key="11">
    <source>
    </source>
</evidence>
<evidence type="ECO:0000269" key="12">
    <source>
    </source>
</evidence>
<evidence type="ECO:0000305" key="13"/>
<evidence type="ECO:0007744" key="14">
    <source>
    </source>
</evidence>
<reference key="1">
    <citation type="journal article" date="1992" name="J. Cell Biol.">
        <title>Homology of the 74-kD cytoplasmic dynein subunit with a flagellar dynein polypeptide suggests an intracellular targeting function.</title>
        <authorList>
            <person name="Paschal B.M."/>
            <person name="Mikami A."/>
            <person name="Pfister K.K."/>
            <person name="Vallee R.B."/>
        </authorList>
    </citation>
    <scope>NUCLEOTIDE SEQUENCE [MRNA] (ISOFORM 1)</scope>
    <scope>ALTERNATIVE SPLICING</scope>
    <source>
        <strain>Sprague-Dawley</strain>
        <tissue>Brain</tissue>
    </source>
</reference>
<reference key="2">
    <citation type="journal article" date="1995" name="J. Biol. Chem.">
        <title>Affinity chromatography demonstrates a direct binding between cytoplasmic dynein and the dynactin complex.</title>
        <authorList>
            <person name="Karki S."/>
            <person name="Holzbaur E.L."/>
        </authorList>
    </citation>
    <scope>INTERACTION WITH DCTN1</scope>
</reference>
<reference key="3">
    <citation type="journal article" date="1995" name="J. Cell Biol.">
        <title>Cytoplasmic dynein binds dynactin through a direct interaction between the intermediate chains and p150Glued.</title>
        <authorList>
            <person name="Vaughan K.T."/>
            <person name="Vallee R.B."/>
        </authorList>
    </citation>
    <scope>INTERACTION WITH DCTN1</scope>
</reference>
<reference key="4">
    <citation type="journal article" date="1996" name="Mol. Biol. Cell">
        <title>Identification and developmental regulation of a neuron-specific subunit of cytoplasmic dynein.</title>
        <authorList>
            <person name="Pfister K.K."/>
            <person name="Salata M.W."/>
            <person name="Dillman J.F. III"/>
            <person name="Torre E."/>
            <person name="Lye R.J."/>
        </authorList>
    </citation>
    <scope>IDENTIFICATION IN THE CYTOPLASMIC DYNEIN 1 COMPLEX</scope>
</reference>
<reference key="5">
    <citation type="journal article" date="1998" name="Biochemistry">
        <title>Cytoplasmic dynein contains a family of differentially expressed light chains.</title>
        <authorList>
            <person name="King S.M."/>
            <person name="Barbarese E."/>
            <person name="Dillman J.F. III"/>
            <person name="Benashski S.E."/>
            <person name="Do K.T."/>
            <person name="Patel-King R.S."/>
            <person name="Pfister K.K."/>
        </authorList>
    </citation>
    <scope>IDENTIFICATION IN THE CYTOPLASMIC DYNEIN 1 COMPLEX</scope>
</reference>
<reference key="6">
    <citation type="journal article" date="2007" name="J. Biol. Chem.">
        <title>Interaction of the DYNLT (TCTEX1/RP3) light chains and the intermediate chains reveals novel intersubunit regulation during assembly of the dynein complex.</title>
        <authorList>
            <person name="Lo K.W."/>
            <person name="Kogoy J.M."/>
            <person name="Rasoul B.A."/>
            <person name="King S.M."/>
            <person name="Pfister K.K."/>
        </authorList>
    </citation>
    <scope>INTERACTION WITH DYNLT1 AND DYNLT3</scope>
</reference>
<reference key="7">
    <citation type="journal article" date="2007" name="J. Neurosci. Res.">
        <title>Intermediate chain subunit as a probe for cytoplasmic dynein function: biochemical analyses and live cell imaging in PC12 cells.</title>
        <authorList>
            <person name="Myers K.R."/>
            <person name="Lo K.W."/>
            <person name="Lye R.J."/>
            <person name="Kogoy J.M."/>
            <person name="Soura V."/>
            <person name="Hafezparast M."/>
            <person name="Pfister K.K."/>
        </authorList>
    </citation>
    <scope>ALTERNATIVE SPLICING (ISOFORMS 2 AND 3)</scope>
    <scope>INTERACTION WITH DYNC1H1</scope>
</reference>
<reference key="8">
    <citation type="journal article" date="2012" name="Nat. Commun.">
        <title>Quantitative maps of protein phosphorylation sites across 14 different rat organs and tissues.</title>
        <authorList>
            <person name="Lundby A."/>
            <person name="Secher A."/>
            <person name="Lage K."/>
            <person name="Nordsborg N.B."/>
            <person name="Dmytriyev A."/>
            <person name="Lundby C."/>
            <person name="Olsen J.V."/>
        </authorList>
    </citation>
    <scope>PHOSPHORYLATION [LARGE SCALE ANALYSIS] AT SER-111; SER-177; SER-195 AND SER-633</scope>
    <scope>IDENTIFICATION BY MASS SPECTROMETRY [LARGE SCALE ANALYSIS]</scope>
</reference>
<organism>
    <name type="scientific">Rattus norvegicus</name>
    <name type="common">Rat</name>
    <dbReference type="NCBI Taxonomy" id="10116"/>
    <lineage>
        <taxon>Eukaryota</taxon>
        <taxon>Metazoa</taxon>
        <taxon>Chordata</taxon>
        <taxon>Craniata</taxon>
        <taxon>Vertebrata</taxon>
        <taxon>Euteleostomi</taxon>
        <taxon>Mammalia</taxon>
        <taxon>Eutheria</taxon>
        <taxon>Euarchontoglires</taxon>
        <taxon>Glires</taxon>
        <taxon>Rodentia</taxon>
        <taxon>Myomorpha</taxon>
        <taxon>Muroidea</taxon>
        <taxon>Muridae</taxon>
        <taxon>Murinae</taxon>
        <taxon>Rattus</taxon>
    </lineage>
</organism>
<feature type="initiator methionine" description="Removed" evidence="4">
    <location>
        <position position="1"/>
    </location>
</feature>
<feature type="chain" id="PRO_0000114654" description="Cytoplasmic dynein 1 intermediate chain 1">
    <location>
        <begin position="2"/>
        <end position="643"/>
    </location>
</feature>
<feature type="repeat" description="WD 1">
    <location>
        <begin position="283"/>
        <end position="332"/>
    </location>
</feature>
<feature type="repeat" description="WD 2">
    <location>
        <begin position="336"/>
        <end position="376"/>
    </location>
</feature>
<feature type="repeat" description="WD 3">
    <location>
        <begin position="385"/>
        <end position="426"/>
    </location>
</feature>
<feature type="repeat" description="WD 4">
    <location>
        <begin position="435"/>
        <end position="475"/>
    </location>
</feature>
<feature type="repeat" description="WD 5">
    <location>
        <begin position="480"/>
        <end position="525"/>
    </location>
</feature>
<feature type="repeat" description="WD 6">
    <location>
        <begin position="528"/>
        <end position="568"/>
    </location>
</feature>
<feature type="repeat" description="WD 7">
    <location>
        <begin position="574"/>
        <end position="613"/>
    </location>
</feature>
<feature type="region of interest" description="Disordered" evidence="6">
    <location>
        <begin position="1"/>
        <end position="65"/>
    </location>
</feature>
<feature type="region of interest" description="Interaction with DCTN1">
    <location>
        <begin position="2"/>
        <end position="123"/>
    </location>
</feature>
<feature type="region of interest" description="Disordered" evidence="6">
    <location>
        <begin position="96"/>
        <end position="123"/>
    </location>
</feature>
<feature type="region of interest" description="Interaction with DYNLT1" evidence="2">
    <location>
        <begin position="145"/>
        <end position="161"/>
    </location>
</feature>
<feature type="region of interest" description="Disordered" evidence="6">
    <location>
        <begin position="167"/>
        <end position="219"/>
    </location>
</feature>
<feature type="compositionally biased region" description="Basic and acidic residues" evidence="6">
    <location>
        <begin position="1"/>
        <end position="13"/>
    </location>
</feature>
<feature type="compositionally biased region" description="Basic and acidic residues" evidence="6">
    <location>
        <begin position="20"/>
        <end position="60"/>
    </location>
</feature>
<feature type="compositionally biased region" description="Low complexity" evidence="6">
    <location>
        <begin position="96"/>
        <end position="107"/>
    </location>
</feature>
<feature type="compositionally biased region" description="Basic and acidic residues" evidence="6">
    <location>
        <begin position="187"/>
        <end position="219"/>
    </location>
</feature>
<feature type="modified residue" description="N-acetylserine" evidence="4">
    <location>
        <position position="2"/>
    </location>
</feature>
<feature type="modified residue" description="Phosphoserine" evidence="3">
    <location>
        <position position="50"/>
    </location>
</feature>
<feature type="modified residue" description="Phosphoserine" evidence="5">
    <location>
        <position position="100"/>
    </location>
</feature>
<feature type="modified residue" description="Phosphothreonine" evidence="4">
    <location>
        <position position="105"/>
    </location>
</feature>
<feature type="modified residue" description="Phosphoserine" evidence="4">
    <location>
        <position position="107"/>
    </location>
</feature>
<feature type="modified residue" description="Phosphoserine" evidence="14">
    <location>
        <position position="111"/>
    </location>
</feature>
<feature type="modified residue" description="Phosphothreonine" evidence="3">
    <location>
        <position position="174"/>
    </location>
</feature>
<feature type="modified residue" description="Phosphoserine" evidence="14">
    <location>
        <position position="177"/>
    </location>
</feature>
<feature type="modified residue" description="Phosphoserine" evidence="14">
    <location>
        <position position="195"/>
    </location>
</feature>
<feature type="modified residue" description="Phosphoserine" evidence="14">
    <location>
        <position position="633"/>
    </location>
</feature>
<feature type="splice variant" id="VSP_039087" description="In isoform 2 and isoform 3." evidence="13">
    <location>
        <begin position="75"/>
        <end position="90"/>
    </location>
</feature>
<feature type="splice variant" id="VSP_039088" description="In isoform 3." evidence="13">
    <location>
        <begin position="121"/>
        <end position="141"/>
    </location>
</feature>